<comment type="function">
    <text evidence="3 4">High-affinity magnesium transporter that mediates the influx of magnesium. Involved in tolerance to Aluminum.</text>
</comment>
<comment type="subcellular location">
    <subcellularLocation>
        <location evidence="3">Cell membrane</location>
        <topology evidence="3">Multi-pass membrane protein</topology>
    </subcellularLocation>
</comment>
<comment type="tissue specificity">
    <text evidence="3 5">Expressed in the whole plant.</text>
</comment>
<comment type="miscellaneous">
    <text>Has the ability to complement mutants in Salmonella enterica and yeast lacking magnesium transport capability.</text>
</comment>
<comment type="similarity">
    <text evidence="6">Belongs to the CorA metal ion transporter (MIT) (TC 1.A.35.5) family.</text>
</comment>
<sequence length="443" mass="50463">MSELKERLLPPRPASAINLRGDAGSRPSPSGRQPLLGVDVLGLKKRGQGLKSWIRVDTSANSQVIEVDKFTMMRRCDLPARDLRLLDPLFVYPSTILGREKAIVVNLEQIRCIITADEVLLLNSLDNYVLRYVVELQQRLKASSVTEVWNQDSLELSRRRSRSLDNVLQNSSPDYLPFEFRALEVALEAACTFLDSQASELEIEAYPLLDELTSKISTLNLERARRLKSRLVALTRRVQKVRDEIEQLMDDDGDMAEMYLTEKKKRMEGSLYGDQSLPVYRTNDCFSLSAPVSPVSSPPESRRLEKSLSIVRSRHDSARSSEDATENIEELEMLLEAYFVVIDSTLNKLTSLKEYIDDTEDFINIQLDNVRNQLIQFELLLTTATFVVAIFGVVAGIFGMNFEIDFFEKPGAFKWVLAITGVCGLVVFLAFLWYYKRRRLMPL</sequence>
<reference key="1">
    <citation type="journal article" date="2001" name="Plant Cell">
        <title>A novel family of magnesium transport genes in Arabidopsis.</title>
        <authorList>
            <person name="Li L."/>
            <person name="Tutone A.F."/>
            <person name="Drummond R.S."/>
            <person name="Gardner R.C."/>
            <person name="Luan S."/>
        </authorList>
    </citation>
    <scope>NUCLEOTIDE SEQUENCE [MRNA]</scope>
    <scope>GENE FAMILY</scope>
    <scope>FUNCTION</scope>
    <scope>SUBCELLULAR LOCATION</scope>
    <scope>TISSUE SPECIFICITY</scope>
    <source>
        <strain>cv. Landsberg erecta</strain>
    </source>
</reference>
<reference key="2">
    <citation type="journal article" date="2000" name="Nature">
        <title>Sequence and analysis of chromosome 1 of the plant Arabidopsis thaliana.</title>
        <authorList>
            <person name="Theologis A."/>
            <person name="Ecker J.R."/>
            <person name="Palm C.J."/>
            <person name="Federspiel N.A."/>
            <person name="Kaul S."/>
            <person name="White O."/>
            <person name="Alonso J."/>
            <person name="Altafi H."/>
            <person name="Araujo R."/>
            <person name="Bowman C.L."/>
            <person name="Brooks S.Y."/>
            <person name="Buehler E."/>
            <person name="Chan A."/>
            <person name="Chao Q."/>
            <person name="Chen H."/>
            <person name="Cheuk R.F."/>
            <person name="Chin C.W."/>
            <person name="Chung M.K."/>
            <person name="Conn L."/>
            <person name="Conway A.B."/>
            <person name="Conway A.R."/>
            <person name="Creasy T.H."/>
            <person name="Dewar K."/>
            <person name="Dunn P."/>
            <person name="Etgu P."/>
            <person name="Feldblyum T.V."/>
            <person name="Feng J.-D."/>
            <person name="Fong B."/>
            <person name="Fujii C.Y."/>
            <person name="Gill J.E."/>
            <person name="Goldsmith A.D."/>
            <person name="Haas B."/>
            <person name="Hansen N.F."/>
            <person name="Hughes B."/>
            <person name="Huizar L."/>
            <person name="Hunter J.L."/>
            <person name="Jenkins J."/>
            <person name="Johnson-Hopson C."/>
            <person name="Khan S."/>
            <person name="Khaykin E."/>
            <person name="Kim C.J."/>
            <person name="Koo H.L."/>
            <person name="Kremenetskaia I."/>
            <person name="Kurtz D.B."/>
            <person name="Kwan A."/>
            <person name="Lam B."/>
            <person name="Langin-Hooper S."/>
            <person name="Lee A."/>
            <person name="Lee J.M."/>
            <person name="Lenz C.A."/>
            <person name="Li J.H."/>
            <person name="Li Y.-P."/>
            <person name="Lin X."/>
            <person name="Liu S.X."/>
            <person name="Liu Z.A."/>
            <person name="Luros J.S."/>
            <person name="Maiti R."/>
            <person name="Marziali A."/>
            <person name="Militscher J."/>
            <person name="Miranda M."/>
            <person name="Nguyen M."/>
            <person name="Nierman W.C."/>
            <person name="Osborne B.I."/>
            <person name="Pai G."/>
            <person name="Peterson J."/>
            <person name="Pham P.K."/>
            <person name="Rizzo M."/>
            <person name="Rooney T."/>
            <person name="Rowley D."/>
            <person name="Sakano H."/>
            <person name="Salzberg S.L."/>
            <person name="Schwartz J.R."/>
            <person name="Shinn P."/>
            <person name="Southwick A.M."/>
            <person name="Sun H."/>
            <person name="Tallon L.J."/>
            <person name="Tambunga G."/>
            <person name="Toriumi M.J."/>
            <person name="Town C.D."/>
            <person name="Utterback T."/>
            <person name="Van Aken S."/>
            <person name="Vaysberg M."/>
            <person name="Vysotskaia V.S."/>
            <person name="Walker M."/>
            <person name="Wu D."/>
            <person name="Yu G."/>
            <person name="Fraser C.M."/>
            <person name="Venter J.C."/>
            <person name="Davis R.W."/>
        </authorList>
    </citation>
    <scope>NUCLEOTIDE SEQUENCE [LARGE SCALE GENOMIC DNA]</scope>
    <source>
        <strain>cv. Columbia</strain>
    </source>
</reference>
<reference key="3">
    <citation type="journal article" date="2017" name="Plant J.">
        <title>Araport11: a complete reannotation of the Arabidopsis thaliana reference genome.</title>
        <authorList>
            <person name="Cheng C.Y."/>
            <person name="Krishnakumar V."/>
            <person name="Chan A.P."/>
            <person name="Thibaud-Nissen F."/>
            <person name="Schobel S."/>
            <person name="Town C.D."/>
        </authorList>
    </citation>
    <scope>GENOME REANNOTATION</scope>
    <source>
        <strain>cv. Columbia</strain>
    </source>
</reference>
<reference key="4">
    <citation type="submission" date="2002-03" db="EMBL/GenBank/DDBJ databases">
        <title>Full-length cDNA from Arabidopsis thaliana.</title>
        <authorList>
            <person name="Brover V.V."/>
            <person name="Troukhan M.E."/>
            <person name="Alexandrov N.A."/>
            <person name="Lu Y.-P."/>
            <person name="Flavell R.B."/>
            <person name="Feldmann K.A."/>
        </authorList>
    </citation>
    <scope>NUCLEOTIDE SEQUENCE [LARGE SCALE MRNA]</scope>
    <source>
        <strain>cv. Columbia</strain>
    </source>
</reference>
<reference key="5">
    <citation type="submission" date="2005-03" db="EMBL/GenBank/DDBJ databases">
        <title>Large-scale analysis of RIKEN Arabidopsis full-length (RAFL) cDNAs.</title>
        <authorList>
            <person name="Totoki Y."/>
            <person name="Seki M."/>
            <person name="Ishida J."/>
            <person name="Nakajima M."/>
            <person name="Enju A."/>
            <person name="Kamiya A."/>
            <person name="Narusaka M."/>
            <person name="Shin-i T."/>
            <person name="Nakagawa M."/>
            <person name="Sakamoto N."/>
            <person name="Oishi K."/>
            <person name="Kohara Y."/>
            <person name="Kobayashi M."/>
            <person name="Toyoda A."/>
            <person name="Sakaki Y."/>
            <person name="Sakurai T."/>
            <person name="Iida K."/>
            <person name="Akiyama K."/>
            <person name="Satou M."/>
            <person name="Toyoda T."/>
            <person name="Konagaya A."/>
            <person name="Carninci P."/>
            <person name="Kawai J."/>
            <person name="Hayashizaki Y."/>
            <person name="Shinozaki K."/>
        </authorList>
    </citation>
    <scope>NUCLEOTIDE SEQUENCE [LARGE SCALE MRNA] OF 106-443</scope>
    <source>
        <strain>cv. Columbia</strain>
    </source>
</reference>
<reference key="6">
    <citation type="journal article" date="2006" name="J. Exp. Bot.">
        <title>Overexpression of an Arabidopsis magnesium transport gene, AtMGT1, in Nicotiana benthamiana confers Al tolerance.</title>
        <authorList>
            <person name="Deng W."/>
            <person name="Luo K."/>
            <person name="Li D."/>
            <person name="Zheng X."/>
            <person name="Wei X."/>
            <person name="Smith W."/>
            <person name="Thammina C."/>
            <person name="Lu L."/>
            <person name="Li Y."/>
            <person name="Pei Y."/>
        </authorList>
    </citation>
    <scope>FUNCTION</scope>
</reference>
<reference key="7">
    <citation type="journal article" date="2009" name="Plant Cell">
        <title>A root-expressed magnesium transporter of the MRS2/MGT gene family in Arabidopsis thaliana allows for growth in low-Mg2+ environments.</title>
        <authorList>
            <person name="Gebert M."/>
            <person name="Meschenmoser K."/>
            <person name="Svidova S."/>
            <person name="Weghuber J."/>
            <person name="Schweyen R."/>
            <person name="Eifler K."/>
            <person name="Lenz H."/>
            <person name="Weyand K."/>
            <person name="Knoop V."/>
        </authorList>
    </citation>
    <scope>GENE FAMILY</scope>
    <scope>NOMENCLATURE</scope>
    <scope>TISSUE SPECIFICITY</scope>
</reference>
<accession>Q9SAH0</accession>
<accession>Q56ZB1</accession>
<accession>Q8LE03</accession>
<evidence type="ECO:0000255" key="1"/>
<evidence type="ECO:0000256" key="2">
    <source>
        <dbReference type="SAM" id="MobiDB-lite"/>
    </source>
</evidence>
<evidence type="ECO:0000269" key="3">
    <source>
    </source>
</evidence>
<evidence type="ECO:0000269" key="4">
    <source>
    </source>
</evidence>
<evidence type="ECO:0000269" key="5">
    <source>
    </source>
</evidence>
<evidence type="ECO:0000305" key="6"/>
<gene>
    <name type="primary">MRS2-10</name>
    <name type="synonym">MGT1</name>
    <name type="ordered locus">At1g80900</name>
    <name type="ORF">F23A5.26</name>
</gene>
<name>MRS2A_ARATH</name>
<protein>
    <recommendedName>
        <fullName>Magnesium transporter MRS2-10</fullName>
    </recommendedName>
    <alternativeName>
        <fullName>Magnesium Transporter 1</fullName>
        <shortName>AtMGT1</shortName>
    </alternativeName>
</protein>
<proteinExistence type="evidence at transcript level"/>
<dbReference type="EMBL" id="AY150294">
    <property type="protein sequence ID" value="AAN73219.1"/>
    <property type="molecule type" value="mRNA"/>
</dbReference>
<dbReference type="EMBL" id="AC011713">
    <property type="protein sequence ID" value="AAF14678.1"/>
    <property type="molecule type" value="Genomic_DNA"/>
</dbReference>
<dbReference type="EMBL" id="CP002684">
    <property type="protein sequence ID" value="AEE36465.1"/>
    <property type="molecule type" value="Genomic_DNA"/>
</dbReference>
<dbReference type="EMBL" id="CP002684">
    <property type="protein sequence ID" value="ANM60438.1"/>
    <property type="molecule type" value="Genomic_DNA"/>
</dbReference>
<dbReference type="EMBL" id="AY085698">
    <property type="protein sequence ID" value="AAM62917.1"/>
    <property type="molecule type" value="mRNA"/>
</dbReference>
<dbReference type="EMBL" id="AK221057">
    <property type="protein sequence ID" value="BAD94839.1"/>
    <property type="molecule type" value="mRNA"/>
</dbReference>
<dbReference type="PIR" id="H96841">
    <property type="entry name" value="H96841"/>
</dbReference>
<dbReference type="RefSeq" id="NP_001322724.1">
    <property type="nucleotide sequence ID" value="NM_001335020.1"/>
</dbReference>
<dbReference type="RefSeq" id="NP_565247.1">
    <property type="nucleotide sequence ID" value="NM_106738.2"/>
</dbReference>
<dbReference type="SMR" id="Q9SAH0"/>
<dbReference type="BioGRID" id="29648">
    <property type="interactions" value="2"/>
</dbReference>
<dbReference type="FunCoup" id="Q9SAH0">
    <property type="interactions" value="862"/>
</dbReference>
<dbReference type="IntAct" id="Q9SAH0">
    <property type="interactions" value="2"/>
</dbReference>
<dbReference type="STRING" id="3702.Q9SAH0"/>
<dbReference type="TCDB" id="1.A.35.5.2">
    <property type="family name" value="the cora metal ion transporter (mit) family"/>
</dbReference>
<dbReference type="iPTMnet" id="Q9SAH0"/>
<dbReference type="PaxDb" id="3702-AT1G80900.1"/>
<dbReference type="ProteomicsDB" id="238999"/>
<dbReference type="EnsemblPlants" id="AT1G80900.1">
    <property type="protein sequence ID" value="AT1G80900.1"/>
    <property type="gene ID" value="AT1G80900"/>
</dbReference>
<dbReference type="EnsemblPlants" id="AT1G80900.2">
    <property type="protein sequence ID" value="AT1G80900.2"/>
    <property type="gene ID" value="AT1G80900"/>
</dbReference>
<dbReference type="GeneID" id="844430"/>
<dbReference type="Gramene" id="AT1G80900.1">
    <property type="protein sequence ID" value="AT1G80900.1"/>
    <property type="gene ID" value="AT1G80900"/>
</dbReference>
<dbReference type="Gramene" id="AT1G80900.2">
    <property type="protein sequence ID" value="AT1G80900.2"/>
    <property type="gene ID" value="AT1G80900"/>
</dbReference>
<dbReference type="KEGG" id="ath:AT1G80900"/>
<dbReference type="Araport" id="AT1G80900"/>
<dbReference type="TAIR" id="AT1G80900">
    <property type="gene designation" value="MGT1"/>
</dbReference>
<dbReference type="eggNOG" id="KOG2662">
    <property type="taxonomic scope" value="Eukaryota"/>
</dbReference>
<dbReference type="HOGENOM" id="CLU_034694_1_1_1"/>
<dbReference type="InParanoid" id="Q9SAH0"/>
<dbReference type="OMA" id="QNSSPDY"/>
<dbReference type="PhylomeDB" id="Q9SAH0"/>
<dbReference type="PRO" id="PR:Q9SAH0"/>
<dbReference type="Proteomes" id="UP000006548">
    <property type="component" value="Chromosome 1"/>
</dbReference>
<dbReference type="ExpressionAtlas" id="Q9SAH0">
    <property type="expression patterns" value="baseline and differential"/>
</dbReference>
<dbReference type="GO" id="GO:0005886">
    <property type="term" value="C:plasma membrane"/>
    <property type="evidence" value="ECO:0007669"/>
    <property type="project" value="UniProtKB-SubCell"/>
</dbReference>
<dbReference type="GO" id="GO:0015095">
    <property type="term" value="F:magnesium ion transmembrane transporter activity"/>
    <property type="evidence" value="ECO:0000314"/>
    <property type="project" value="TAIR"/>
</dbReference>
<dbReference type="CDD" id="cd12823">
    <property type="entry name" value="Mrs2_Mfm1p-like"/>
    <property type="match status" value="1"/>
</dbReference>
<dbReference type="FunFam" id="1.20.58.340:FF:000009">
    <property type="entry name" value="Magnesium transporter MRS2-1"/>
    <property type="match status" value="1"/>
</dbReference>
<dbReference type="FunFam" id="2.40.128.330:FF:000001">
    <property type="entry name" value="Magnesium transporter MRS2-1"/>
    <property type="match status" value="1"/>
</dbReference>
<dbReference type="Gene3D" id="2.40.128.330">
    <property type="match status" value="1"/>
</dbReference>
<dbReference type="Gene3D" id="1.20.58.340">
    <property type="entry name" value="Magnesium transport protein CorA, transmembrane region"/>
    <property type="match status" value="2"/>
</dbReference>
<dbReference type="InterPro" id="IPR045863">
    <property type="entry name" value="CorA_TM1_TM2"/>
</dbReference>
<dbReference type="InterPro" id="IPR039204">
    <property type="entry name" value="MRS2-like"/>
</dbReference>
<dbReference type="PANTHER" id="PTHR13890:SF40">
    <property type="entry name" value="MAGNESIUM TRANSPORTER MRS2-10"/>
    <property type="match status" value="1"/>
</dbReference>
<dbReference type="PANTHER" id="PTHR13890">
    <property type="entry name" value="RNA SPLICING PROTEIN MRS2, MITOCHONDRIAL"/>
    <property type="match status" value="1"/>
</dbReference>
<dbReference type="Pfam" id="PF22099">
    <property type="entry name" value="MRS2-like"/>
    <property type="match status" value="2"/>
</dbReference>
<dbReference type="SUPFAM" id="SSF144083">
    <property type="entry name" value="Magnesium transport protein CorA, transmembrane region"/>
    <property type="match status" value="1"/>
</dbReference>
<organism>
    <name type="scientific">Arabidopsis thaliana</name>
    <name type="common">Mouse-ear cress</name>
    <dbReference type="NCBI Taxonomy" id="3702"/>
    <lineage>
        <taxon>Eukaryota</taxon>
        <taxon>Viridiplantae</taxon>
        <taxon>Streptophyta</taxon>
        <taxon>Embryophyta</taxon>
        <taxon>Tracheophyta</taxon>
        <taxon>Spermatophyta</taxon>
        <taxon>Magnoliopsida</taxon>
        <taxon>eudicotyledons</taxon>
        <taxon>Gunneridae</taxon>
        <taxon>Pentapetalae</taxon>
        <taxon>rosids</taxon>
        <taxon>malvids</taxon>
        <taxon>Brassicales</taxon>
        <taxon>Brassicaceae</taxon>
        <taxon>Camelineae</taxon>
        <taxon>Arabidopsis</taxon>
    </lineage>
</organism>
<keyword id="KW-1003">Cell membrane</keyword>
<keyword id="KW-0406">Ion transport</keyword>
<keyword id="KW-0460">Magnesium</keyword>
<keyword id="KW-0472">Membrane</keyword>
<keyword id="KW-1185">Reference proteome</keyword>
<keyword id="KW-0812">Transmembrane</keyword>
<keyword id="KW-1133">Transmembrane helix</keyword>
<keyword id="KW-0813">Transport</keyword>
<feature type="chain" id="PRO_0000394174" description="Magnesium transporter MRS2-10">
    <location>
        <begin position="1"/>
        <end position="443"/>
    </location>
</feature>
<feature type="transmembrane region" description="Helical" evidence="1">
    <location>
        <begin position="379"/>
        <end position="399"/>
    </location>
</feature>
<feature type="transmembrane region" description="Helical" evidence="1">
    <location>
        <begin position="415"/>
        <end position="435"/>
    </location>
</feature>
<feature type="region of interest" description="Disordered" evidence="2">
    <location>
        <begin position="1"/>
        <end position="33"/>
    </location>
</feature>
<feature type="short sequence motif" description="Required for magnesium transport activity">
    <location>
        <begin position="399"/>
        <end position="401"/>
    </location>
</feature>
<feature type="sequence conflict" description="In Ref. 5; BAD94839." evidence="6" ref="5">
    <original>L</original>
    <variation>S</variation>
    <location>
        <position position="120"/>
    </location>
</feature>
<feature type="sequence conflict" description="In Ref. 1; AAN73219 and 4; AAM62917." evidence="6" ref="1 4">
    <original>L</original>
    <variation>F</variation>
    <location>
        <position position="168"/>
    </location>
</feature>
<feature type="sequence conflict" description="In Ref. 1; AAN73219 and 4; AAM62917." evidence="6" ref="1 4">
    <original>Y</original>
    <variation>F</variation>
    <location>
        <position position="434"/>
    </location>
</feature>